<reference key="1">
    <citation type="journal article" date="2009" name="Nature">
        <title>Evolution of pathogenicity and sexual reproduction in eight Candida genomes.</title>
        <authorList>
            <person name="Butler G."/>
            <person name="Rasmussen M.D."/>
            <person name="Lin M.F."/>
            <person name="Santos M.A.S."/>
            <person name="Sakthikumar S."/>
            <person name="Munro C.A."/>
            <person name="Rheinbay E."/>
            <person name="Grabherr M."/>
            <person name="Forche A."/>
            <person name="Reedy J.L."/>
            <person name="Agrafioti I."/>
            <person name="Arnaud M.B."/>
            <person name="Bates S."/>
            <person name="Brown A.J.P."/>
            <person name="Brunke S."/>
            <person name="Costanzo M.C."/>
            <person name="Fitzpatrick D.A."/>
            <person name="de Groot P.W.J."/>
            <person name="Harris D."/>
            <person name="Hoyer L.L."/>
            <person name="Hube B."/>
            <person name="Klis F.M."/>
            <person name="Kodira C."/>
            <person name="Lennard N."/>
            <person name="Logue M.E."/>
            <person name="Martin R."/>
            <person name="Neiman A.M."/>
            <person name="Nikolaou E."/>
            <person name="Quail M.A."/>
            <person name="Quinn J."/>
            <person name="Santos M.C."/>
            <person name="Schmitzberger F.F."/>
            <person name="Sherlock G."/>
            <person name="Shah P."/>
            <person name="Silverstein K.A.T."/>
            <person name="Skrzypek M.S."/>
            <person name="Soll D."/>
            <person name="Staggs R."/>
            <person name="Stansfield I."/>
            <person name="Stumpf M.P.H."/>
            <person name="Sudbery P.E."/>
            <person name="Srikantha T."/>
            <person name="Zeng Q."/>
            <person name="Berman J."/>
            <person name="Berriman M."/>
            <person name="Heitman J."/>
            <person name="Gow N.A.R."/>
            <person name="Lorenz M.C."/>
            <person name="Birren B.W."/>
            <person name="Kellis M."/>
            <person name="Cuomo C.A."/>
        </authorList>
    </citation>
    <scope>NUCLEOTIDE SEQUENCE [LARGE SCALE GENOMIC DNA]</scope>
    <source>
        <strain>WO-1</strain>
    </source>
</reference>
<evidence type="ECO:0000255" key="1">
    <source>
        <dbReference type="HAMAP-Rule" id="MF_03175"/>
    </source>
</evidence>
<evidence type="ECO:0000256" key="2">
    <source>
        <dbReference type="SAM" id="MobiDB-lite"/>
    </source>
</evidence>
<organism>
    <name type="scientific">Candida albicans (strain WO-1)</name>
    <name type="common">Yeast</name>
    <dbReference type="NCBI Taxonomy" id="294748"/>
    <lineage>
        <taxon>Eukaryota</taxon>
        <taxon>Fungi</taxon>
        <taxon>Dikarya</taxon>
        <taxon>Ascomycota</taxon>
        <taxon>Saccharomycotina</taxon>
        <taxon>Pichiomycetes</taxon>
        <taxon>Debaryomycetaceae</taxon>
        <taxon>Candida/Lodderomyces clade</taxon>
        <taxon>Candida</taxon>
    </lineage>
</organism>
<dbReference type="EC" id="3.4.11.18" evidence="1"/>
<dbReference type="EMBL" id="CM000312">
    <property type="protein sequence ID" value="EEQ46612.1"/>
    <property type="molecule type" value="Genomic_DNA"/>
</dbReference>
<dbReference type="SMR" id="C4YSA9"/>
<dbReference type="PaxDb" id="5476-C4YSA9"/>
<dbReference type="VEuPathDB" id="FungiDB:CAWG_04971"/>
<dbReference type="HOGENOM" id="CLU_015857_7_2_1"/>
<dbReference type="OMA" id="PFAKRWL"/>
<dbReference type="OrthoDB" id="5730at766764"/>
<dbReference type="Proteomes" id="UP000001429">
    <property type="component" value="Chromosome 6"/>
</dbReference>
<dbReference type="GO" id="GO:0005737">
    <property type="term" value="C:cytoplasm"/>
    <property type="evidence" value="ECO:0007669"/>
    <property type="project" value="UniProtKB-SubCell"/>
</dbReference>
<dbReference type="GO" id="GO:0004239">
    <property type="term" value="F:initiator methionyl aminopeptidase activity"/>
    <property type="evidence" value="ECO:0007669"/>
    <property type="project" value="UniProtKB-UniRule"/>
</dbReference>
<dbReference type="GO" id="GO:0046872">
    <property type="term" value="F:metal ion binding"/>
    <property type="evidence" value="ECO:0007669"/>
    <property type="project" value="UniProtKB-UniRule"/>
</dbReference>
<dbReference type="GO" id="GO:0070006">
    <property type="term" value="F:metalloaminopeptidase activity"/>
    <property type="evidence" value="ECO:0007669"/>
    <property type="project" value="UniProtKB-UniRule"/>
</dbReference>
<dbReference type="GO" id="GO:0006508">
    <property type="term" value="P:proteolysis"/>
    <property type="evidence" value="ECO:0007669"/>
    <property type="project" value="UniProtKB-KW"/>
</dbReference>
<dbReference type="CDD" id="cd01088">
    <property type="entry name" value="MetAP2"/>
    <property type="match status" value="1"/>
</dbReference>
<dbReference type="Gene3D" id="3.90.230.10">
    <property type="entry name" value="Creatinase/methionine aminopeptidase superfamily"/>
    <property type="match status" value="1"/>
</dbReference>
<dbReference type="Gene3D" id="1.10.10.10">
    <property type="entry name" value="Winged helix-like DNA-binding domain superfamily/Winged helix DNA-binding domain"/>
    <property type="match status" value="1"/>
</dbReference>
<dbReference type="HAMAP" id="MF_03175">
    <property type="entry name" value="MetAP_2_euk"/>
    <property type="match status" value="1"/>
</dbReference>
<dbReference type="InterPro" id="IPR036005">
    <property type="entry name" value="Creatinase/aminopeptidase-like"/>
</dbReference>
<dbReference type="InterPro" id="IPR050247">
    <property type="entry name" value="Met_Aminopeptidase_Type2"/>
</dbReference>
<dbReference type="InterPro" id="IPR000994">
    <property type="entry name" value="Pept_M24"/>
</dbReference>
<dbReference type="InterPro" id="IPR001714">
    <property type="entry name" value="Pept_M24_MAP"/>
</dbReference>
<dbReference type="InterPro" id="IPR002468">
    <property type="entry name" value="Pept_M24A_MAP2"/>
</dbReference>
<dbReference type="InterPro" id="IPR018349">
    <property type="entry name" value="Pept_M24A_MAP2_BS"/>
</dbReference>
<dbReference type="InterPro" id="IPR036388">
    <property type="entry name" value="WH-like_DNA-bd_sf"/>
</dbReference>
<dbReference type="InterPro" id="IPR036390">
    <property type="entry name" value="WH_DNA-bd_sf"/>
</dbReference>
<dbReference type="NCBIfam" id="TIGR00501">
    <property type="entry name" value="met_pdase_II"/>
    <property type="match status" value="1"/>
</dbReference>
<dbReference type="PANTHER" id="PTHR45777">
    <property type="entry name" value="METHIONINE AMINOPEPTIDASE 2"/>
    <property type="match status" value="1"/>
</dbReference>
<dbReference type="PANTHER" id="PTHR45777:SF2">
    <property type="entry name" value="METHIONINE AMINOPEPTIDASE 2"/>
    <property type="match status" value="1"/>
</dbReference>
<dbReference type="Pfam" id="PF00557">
    <property type="entry name" value="Peptidase_M24"/>
    <property type="match status" value="1"/>
</dbReference>
<dbReference type="PRINTS" id="PR00599">
    <property type="entry name" value="MAPEPTIDASE"/>
</dbReference>
<dbReference type="SUPFAM" id="SSF55920">
    <property type="entry name" value="Creatinase/aminopeptidase"/>
    <property type="match status" value="1"/>
</dbReference>
<dbReference type="SUPFAM" id="SSF46785">
    <property type="entry name" value="Winged helix' DNA-binding domain"/>
    <property type="match status" value="1"/>
</dbReference>
<dbReference type="PROSITE" id="PS01202">
    <property type="entry name" value="MAP_2"/>
    <property type="match status" value="1"/>
</dbReference>
<proteinExistence type="inferred from homology"/>
<keyword id="KW-0031">Aminopeptidase</keyword>
<keyword id="KW-0963">Cytoplasm</keyword>
<keyword id="KW-0378">Hydrolase</keyword>
<keyword id="KW-0479">Metal-binding</keyword>
<keyword id="KW-0645">Protease</keyword>
<name>MAP2_CANAW</name>
<accession>C4YSA9</accession>
<protein>
    <recommendedName>
        <fullName evidence="1">Methionine aminopeptidase 2</fullName>
        <shortName evidence="1">MAP 2</shortName>
        <shortName evidence="1">MetAP 2</shortName>
        <ecNumber evidence="1">3.4.11.18</ecNumber>
    </recommendedName>
    <alternativeName>
        <fullName evidence="1">Peptidase M</fullName>
    </alternativeName>
</protein>
<feature type="chain" id="PRO_0000407645" description="Methionine aminopeptidase 2">
    <location>
        <begin position="1"/>
        <end position="447"/>
    </location>
</feature>
<feature type="region of interest" description="Disordered" evidence="2">
    <location>
        <begin position="1"/>
        <end position="86"/>
    </location>
</feature>
<feature type="compositionally biased region" description="Basic and acidic residues" evidence="2">
    <location>
        <begin position="8"/>
        <end position="32"/>
    </location>
</feature>
<feature type="compositionally biased region" description="Acidic residues" evidence="2">
    <location>
        <begin position="43"/>
        <end position="60"/>
    </location>
</feature>
<feature type="compositionally biased region" description="Basic residues" evidence="2">
    <location>
        <begin position="71"/>
        <end position="86"/>
    </location>
</feature>
<feature type="binding site" evidence="1">
    <location>
        <position position="198"/>
    </location>
    <ligand>
        <name>substrate</name>
    </ligand>
</feature>
<feature type="binding site" evidence="1">
    <location>
        <position position="218"/>
    </location>
    <ligand>
        <name>a divalent metal cation</name>
        <dbReference type="ChEBI" id="CHEBI:60240"/>
        <label>1</label>
    </ligand>
</feature>
<feature type="binding site" evidence="1">
    <location>
        <position position="229"/>
    </location>
    <ligand>
        <name>a divalent metal cation</name>
        <dbReference type="ChEBI" id="CHEBI:60240"/>
        <label>1</label>
    </ligand>
</feature>
<feature type="binding site" evidence="1">
    <location>
        <position position="229"/>
    </location>
    <ligand>
        <name>a divalent metal cation</name>
        <dbReference type="ChEBI" id="CHEBI:60240"/>
        <label>2</label>
        <note>catalytic</note>
    </ligand>
</feature>
<feature type="binding site" evidence="1">
    <location>
        <position position="300"/>
    </location>
    <ligand>
        <name>a divalent metal cation</name>
        <dbReference type="ChEBI" id="CHEBI:60240"/>
        <label>2</label>
        <note>catalytic</note>
    </ligand>
</feature>
<feature type="binding site" evidence="1">
    <location>
        <position position="308"/>
    </location>
    <ligand>
        <name>substrate</name>
    </ligand>
</feature>
<feature type="binding site" evidence="1">
    <location>
        <position position="333"/>
    </location>
    <ligand>
        <name>a divalent metal cation</name>
        <dbReference type="ChEBI" id="CHEBI:60240"/>
        <label>2</label>
        <note>catalytic</note>
    </ligand>
</feature>
<feature type="binding site" evidence="1">
    <location>
        <position position="428"/>
    </location>
    <ligand>
        <name>a divalent metal cation</name>
        <dbReference type="ChEBI" id="CHEBI:60240"/>
        <label>1</label>
    </ligand>
</feature>
<feature type="binding site" evidence="1">
    <location>
        <position position="428"/>
    </location>
    <ligand>
        <name>a divalent metal cation</name>
        <dbReference type="ChEBI" id="CHEBI:60240"/>
        <label>2</label>
        <note>catalytic</note>
    </ligand>
</feature>
<sequence>MAGATEGEDTKVIESKINELNIDKPKLEDNNEAKGNGNGNESGGDDDDDKEDDDDNDEITEPSTSTSSGDKKKKKNKNKKKKKKKIVSIDSSYPEGIFPEGQWMEYPLEDINSYRTTSEEKRYLDRQQNNKWQDFRKGAEIHRRVRHKAQSSIRPGMTMIEIANLIEDSVRNYSGNDHTLKAGIGFPTGLSLNHVAAHYTPNTGDKLILKKDDIMKVDIGVHVNGRICDSAFTMTFNEDGKYDTIMQAVKEATYTGIKESGIDVRLNDIGAAIQEVMESYEMEENGKTYPIKCIKNLNGHNIDDFVIHSGKSVPIIANGDMTKMEEGETFAIETFGSTGNGYVLPEGECSHYAMNKGVEHLKPPSERSKQLLETIKQNFGTLPWCRRYLERTGEEKYLFALNQLVRHGIVEEYPPIVDKRGSYTAQFEHTILLHPHKKEVVTKGDDY</sequence>
<comment type="function">
    <text evidence="1">Cotranslationally removes the N-terminal methionine from nascent proteins. The N-terminal methionine is often cleaved when the second residue in the primary sequence is small and uncharged (Met-Ala-, Cys, Gly, Pro, Ser, Thr, or Val).</text>
</comment>
<comment type="catalytic activity">
    <reaction evidence="1">
        <text>Release of N-terminal amino acids, preferentially methionine, from peptides and arylamides.</text>
        <dbReference type="EC" id="3.4.11.18"/>
    </reaction>
</comment>
<comment type="cofactor">
    <cofactor evidence="1">
        <name>Co(2+)</name>
        <dbReference type="ChEBI" id="CHEBI:48828"/>
    </cofactor>
    <cofactor evidence="1">
        <name>Zn(2+)</name>
        <dbReference type="ChEBI" id="CHEBI:29105"/>
    </cofactor>
    <cofactor evidence="1">
        <name>Mn(2+)</name>
        <dbReference type="ChEBI" id="CHEBI:29035"/>
    </cofactor>
    <cofactor evidence="1">
        <name>Fe(2+)</name>
        <dbReference type="ChEBI" id="CHEBI:29033"/>
    </cofactor>
    <text evidence="1">Binds 2 divalent metal cations per subunit. Has a high-affinity and a low affinity metal-binding site. The true nature of the physiological cofactor is under debate. The enzyme is active with cobalt, zinc, manganese or divalent iron ions. Most likely, methionine aminopeptidases function as mononuclear Fe(2+)-metalloproteases under physiological conditions, and the catalytically relevant metal-binding site has been assigned to the histidine-containing high-affinity site.</text>
</comment>
<comment type="subcellular location">
    <subcellularLocation>
        <location evidence="1">Cytoplasm</location>
    </subcellularLocation>
</comment>
<comment type="similarity">
    <text evidence="1">Belongs to the peptidase M24A family. Methionine aminopeptidase eukaryotic type 2 subfamily.</text>
</comment>
<gene>
    <name evidence="1" type="primary">MAP2</name>
    <name type="ORF">CAWG_04971</name>
</gene>